<reference key="1">
    <citation type="submission" date="2008-10" db="EMBL/GenBank/DDBJ databases">
        <title>Genome sequence of Bacillus cereus B4264.</title>
        <authorList>
            <person name="Dodson R.J."/>
            <person name="Durkin A.S."/>
            <person name="Rosovitz M.J."/>
            <person name="Rasko D.A."/>
            <person name="Hoffmaster A."/>
            <person name="Ravel J."/>
            <person name="Sutton G."/>
        </authorList>
    </citation>
    <scope>NUCLEOTIDE SEQUENCE [LARGE SCALE GENOMIC DNA]</scope>
    <source>
        <strain>B4264</strain>
    </source>
</reference>
<organism>
    <name type="scientific">Bacillus cereus (strain B4264)</name>
    <dbReference type="NCBI Taxonomy" id="405532"/>
    <lineage>
        <taxon>Bacteria</taxon>
        <taxon>Bacillati</taxon>
        <taxon>Bacillota</taxon>
        <taxon>Bacilli</taxon>
        <taxon>Bacillales</taxon>
        <taxon>Bacillaceae</taxon>
        <taxon>Bacillus</taxon>
        <taxon>Bacillus cereus group</taxon>
    </lineage>
</organism>
<sequence>MSKLWGGRFTEEAEAWVEEFGASISFDQQLVNQDINGSMAHVTMLAKQGIVTQEEAEKIKIGLQYLLKEAKENKLQFSVEAEDIHLNIEKMLIEQIGEVGGKLHTGRSRNDQVATDMHLYLKEKVEHIIKATKQLQTVLVHQAENNIETIMPGYTHLQRAQPISFAHHILAYFWMLERDVNRYEDSLKRINISPLGAGALAGTTFPIDREYSAELLGFNGIYENSLDAVSDRDFILEFLSNSSMLMMHLSRFCEELILWSSQEFQFIEMSDQYATGSSIMPQKKNPDMAELIRGKTGRVYGNLFSLLTVMKGLPLAYNKDLQEDKEGMFDTVKTVEGCLHIMAGMLETMTVNKEKMGQAVTQDFSNATEIADYLANKGLPFRQAHEIVGKLVLYCTQKGIYLLDVSLETYKEMSSLFEEDLYEVLSPYAAVKRRNSAGGTGFEQIKNALEKAKGLTKEVIKG</sequence>
<proteinExistence type="inferred from homology"/>
<protein>
    <recommendedName>
        <fullName evidence="1">Argininosuccinate lyase</fullName>
        <shortName evidence="1">ASAL</shortName>
        <ecNumber evidence="1">4.3.2.1</ecNumber>
    </recommendedName>
    <alternativeName>
        <fullName evidence="1">Arginosuccinase</fullName>
    </alternativeName>
</protein>
<keyword id="KW-0028">Amino-acid biosynthesis</keyword>
<keyword id="KW-0055">Arginine biosynthesis</keyword>
<keyword id="KW-0963">Cytoplasm</keyword>
<keyword id="KW-0456">Lyase</keyword>
<name>ARLY_BACC4</name>
<gene>
    <name evidence="1" type="primary">argH</name>
    <name type="ordered locus">BCB4264_A4737</name>
</gene>
<comment type="catalytic activity">
    <reaction evidence="1">
        <text>2-(N(omega)-L-arginino)succinate = fumarate + L-arginine</text>
        <dbReference type="Rhea" id="RHEA:24020"/>
        <dbReference type="ChEBI" id="CHEBI:29806"/>
        <dbReference type="ChEBI" id="CHEBI:32682"/>
        <dbReference type="ChEBI" id="CHEBI:57472"/>
        <dbReference type="EC" id="4.3.2.1"/>
    </reaction>
</comment>
<comment type="pathway">
    <text evidence="1">Amino-acid biosynthesis; L-arginine biosynthesis; L-arginine from L-ornithine and carbamoyl phosphate: step 3/3.</text>
</comment>
<comment type="subcellular location">
    <subcellularLocation>
        <location evidence="1">Cytoplasm</location>
    </subcellularLocation>
</comment>
<comment type="similarity">
    <text evidence="1">Belongs to the lyase 1 family. Argininosuccinate lyase subfamily.</text>
</comment>
<dbReference type="EC" id="4.3.2.1" evidence="1"/>
<dbReference type="EMBL" id="CP001176">
    <property type="protein sequence ID" value="ACK64015.1"/>
    <property type="molecule type" value="Genomic_DNA"/>
</dbReference>
<dbReference type="RefSeq" id="WP_000041293.1">
    <property type="nucleotide sequence ID" value="NC_011725.1"/>
</dbReference>
<dbReference type="SMR" id="B7H6Y4"/>
<dbReference type="KEGG" id="bcb:BCB4264_A4737"/>
<dbReference type="HOGENOM" id="CLU_027272_2_3_9"/>
<dbReference type="UniPathway" id="UPA00068">
    <property type="reaction ID" value="UER00114"/>
</dbReference>
<dbReference type="Proteomes" id="UP000007096">
    <property type="component" value="Chromosome"/>
</dbReference>
<dbReference type="GO" id="GO:0005829">
    <property type="term" value="C:cytosol"/>
    <property type="evidence" value="ECO:0007669"/>
    <property type="project" value="TreeGrafter"/>
</dbReference>
<dbReference type="GO" id="GO:0004056">
    <property type="term" value="F:argininosuccinate lyase activity"/>
    <property type="evidence" value="ECO:0007669"/>
    <property type="project" value="UniProtKB-UniRule"/>
</dbReference>
<dbReference type="GO" id="GO:0042450">
    <property type="term" value="P:arginine biosynthetic process via ornithine"/>
    <property type="evidence" value="ECO:0007669"/>
    <property type="project" value="InterPro"/>
</dbReference>
<dbReference type="GO" id="GO:0006526">
    <property type="term" value="P:L-arginine biosynthetic process"/>
    <property type="evidence" value="ECO:0007669"/>
    <property type="project" value="UniProtKB-UniRule"/>
</dbReference>
<dbReference type="CDD" id="cd01359">
    <property type="entry name" value="Argininosuccinate_lyase"/>
    <property type="match status" value="1"/>
</dbReference>
<dbReference type="FunFam" id="1.10.275.10:FF:000002">
    <property type="entry name" value="Argininosuccinate lyase"/>
    <property type="match status" value="1"/>
</dbReference>
<dbReference type="FunFam" id="1.10.40.30:FF:000001">
    <property type="entry name" value="Argininosuccinate lyase"/>
    <property type="match status" value="1"/>
</dbReference>
<dbReference type="FunFam" id="1.20.200.10:FF:000006">
    <property type="entry name" value="Argininosuccinate lyase"/>
    <property type="match status" value="1"/>
</dbReference>
<dbReference type="Gene3D" id="1.10.40.30">
    <property type="entry name" value="Fumarase/aspartase (C-terminal domain)"/>
    <property type="match status" value="1"/>
</dbReference>
<dbReference type="Gene3D" id="1.20.200.10">
    <property type="entry name" value="Fumarase/aspartase (Central domain)"/>
    <property type="match status" value="1"/>
</dbReference>
<dbReference type="Gene3D" id="1.10.275.10">
    <property type="entry name" value="Fumarase/aspartase (N-terminal domain)"/>
    <property type="match status" value="1"/>
</dbReference>
<dbReference type="HAMAP" id="MF_00006">
    <property type="entry name" value="Arg_succ_lyase"/>
    <property type="match status" value="1"/>
</dbReference>
<dbReference type="InterPro" id="IPR029419">
    <property type="entry name" value="Arg_succ_lyase_C"/>
</dbReference>
<dbReference type="InterPro" id="IPR009049">
    <property type="entry name" value="Argininosuccinate_lyase"/>
</dbReference>
<dbReference type="InterPro" id="IPR024083">
    <property type="entry name" value="Fumarase/histidase_N"/>
</dbReference>
<dbReference type="InterPro" id="IPR020557">
    <property type="entry name" value="Fumarate_lyase_CS"/>
</dbReference>
<dbReference type="InterPro" id="IPR000362">
    <property type="entry name" value="Fumarate_lyase_fam"/>
</dbReference>
<dbReference type="InterPro" id="IPR022761">
    <property type="entry name" value="Fumarate_lyase_N"/>
</dbReference>
<dbReference type="InterPro" id="IPR008948">
    <property type="entry name" value="L-Aspartase-like"/>
</dbReference>
<dbReference type="NCBIfam" id="TIGR00838">
    <property type="entry name" value="argH"/>
    <property type="match status" value="1"/>
</dbReference>
<dbReference type="PANTHER" id="PTHR43814">
    <property type="entry name" value="ARGININOSUCCINATE LYASE"/>
    <property type="match status" value="1"/>
</dbReference>
<dbReference type="PANTHER" id="PTHR43814:SF1">
    <property type="entry name" value="ARGININOSUCCINATE LYASE"/>
    <property type="match status" value="1"/>
</dbReference>
<dbReference type="Pfam" id="PF14698">
    <property type="entry name" value="ASL_C2"/>
    <property type="match status" value="1"/>
</dbReference>
<dbReference type="Pfam" id="PF00206">
    <property type="entry name" value="Lyase_1"/>
    <property type="match status" value="1"/>
</dbReference>
<dbReference type="PRINTS" id="PR00145">
    <property type="entry name" value="ARGSUCLYASE"/>
</dbReference>
<dbReference type="PRINTS" id="PR00149">
    <property type="entry name" value="FUMRATELYASE"/>
</dbReference>
<dbReference type="SUPFAM" id="SSF48557">
    <property type="entry name" value="L-aspartase-like"/>
    <property type="match status" value="1"/>
</dbReference>
<dbReference type="PROSITE" id="PS00163">
    <property type="entry name" value="FUMARATE_LYASES"/>
    <property type="match status" value="1"/>
</dbReference>
<feature type="chain" id="PRO_1000116198" description="Argininosuccinate lyase">
    <location>
        <begin position="1"/>
        <end position="462"/>
    </location>
</feature>
<evidence type="ECO:0000255" key="1">
    <source>
        <dbReference type="HAMAP-Rule" id="MF_00006"/>
    </source>
</evidence>
<accession>B7H6Y4</accession>